<evidence type="ECO:0000255" key="1"/>
<evidence type="ECO:0000255" key="2">
    <source>
        <dbReference type="PROSITE-ProRule" id="PRU00498"/>
    </source>
</evidence>
<evidence type="ECO:0000305" key="3"/>
<name>TM2D2_BOVIN</name>
<accession>Q2TA35</accession>
<proteinExistence type="evidence at transcript level"/>
<gene>
    <name type="primary">TM2D2</name>
</gene>
<comment type="subcellular location">
    <subcellularLocation>
        <location evidence="3">Membrane</location>
        <topology evidence="3">Multi-pass membrane protein</topology>
    </subcellularLocation>
</comment>
<comment type="similarity">
    <text evidence="3">Belongs to the TM2 family.</text>
</comment>
<protein>
    <recommendedName>
        <fullName>TM2 domain-containing protein 2</fullName>
    </recommendedName>
</protein>
<reference key="1">
    <citation type="submission" date="2005-12" db="EMBL/GenBank/DDBJ databases">
        <authorList>
            <consortium name="NIH - Mammalian Gene Collection (MGC) project"/>
        </authorList>
    </citation>
    <scope>NUCLEOTIDE SEQUENCE [LARGE SCALE MRNA]</scope>
    <source>
        <strain>Crossbred X Angus</strain>
        <tissue>Liver</tissue>
    </source>
</reference>
<keyword id="KW-0325">Glycoprotein</keyword>
<keyword id="KW-0472">Membrane</keyword>
<keyword id="KW-1185">Reference proteome</keyword>
<keyword id="KW-0732">Signal</keyword>
<keyword id="KW-0812">Transmembrane</keyword>
<keyword id="KW-1133">Transmembrane helix</keyword>
<organism>
    <name type="scientific">Bos taurus</name>
    <name type="common">Bovine</name>
    <dbReference type="NCBI Taxonomy" id="9913"/>
    <lineage>
        <taxon>Eukaryota</taxon>
        <taxon>Metazoa</taxon>
        <taxon>Chordata</taxon>
        <taxon>Craniata</taxon>
        <taxon>Vertebrata</taxon>
        <taxon>Euteleostomi</taxon>
        <taxon>Mammalia</taxon>
        <taxon>Eutheria</taxon>
        <taxon>Laurasiatheria</taxon>
        <taxon>Artiodactyla</taxon>
        <taxon>Ruminantia</taxon>
        <taxon>Pecora</taxon>
        <taxon>Bovidae</taxon>
        <taxon>Bovinae</taxon>
        <taxon>Bos</taxon>
    </lineage>
</organism>
<dbReference type="EMBL" id="BC111135">
    <property type="protein sequence ID" value="AAI11136.1"/>
    <property type="molecule type" value="mRNA"/>
</dbReference>
<dbReference type="RefSeq" id="NP_001033145.1">
    <property type="nucleotide sequence ID" value="NM_001038056.2"/>
</dbReference>
<dbReference type="FunCoup" id="Q2TA35">
    <property type="interactions" value="1978"/>
</dbReference>
<dbReference type="STRING" id="9913.ENSBTAP00000004567"/>
<dbReference type="GlyCosmos" id="Q2TA35">
    <property type="glycosylation" value="1 site, No reported glycans"/>
</dbReference>
<dbReference type="GlyGen" id="Q2TA35">
    <property type="glycosylation" value="2 sites"/>
</dbReference>
<dbReference type="PaxDb" id="9913-ENSBTAP00000004567"/>
<dbReference type="Ensembl" id="ENSBTAT00000004567.5">
    <property type="protein sequence ID" value="ENSBTAP00000004567.3"/>
    <property type="gene ID" value="ENSBTAG00000003516.5"/>
</dbReference>
<dbReference type="GeneID" id="507906"/>
<dbReference type="KEGG" id="bta:507906"/>
<dbReference type="CTD" id="83877"/>
<dbReference type="VEuPathDB" id="HostDB:ENSBTAG00000003516"/>
<dbReference type="VGNC" id="VGNC:35901">
    <property type="gene designation" value="TM2D2"/>
</dbReference>
<dbReference type="eggNOG" id="KOG4272">
    <property type="taxonomic scope" value="Eukaryota"/>
</dbReference>
<dbReference type="GeneTree" id="ENSGT00730000111181"/>
<dbReference type="HOGENOM" id="CLU_084872_3_0_1"/>
<dbReference type="InParanoid" id="Q2TA35"/>
<dbReference type="OMA" id="PIDHKGN"/>
<dbReference type="OrthoDB" id="408511at2759"/>
<dbReference type="TreeFam" id="TF314896"/>
<dbReference type="Proteomes" id="UP000009136">
    <property type="component" value="Chromosome 27"/>
</dbReference>
<dbReference type="Bgee" id="ENSBTAG00000003516">
    <property type="expression patterns" value="Expressed in rectus femoris and 109 other cell types or tissues"/>
</dbReference>
<dbReference type="GO" id="GO:0016020">
    <property type="term" value="C:membrane"/>
    <property type="evidence" value="ECO:0007669"/>
    <property type="project" value="UniProtKB-SubCell"/>
</dbReference>
<dbReference type="InterPro" id="IPR007829">
    <property type="entry name" value="TM2"/>
</dbReference>
<dbReference type="InterPro" id="IPR050932">
    <property type="entry name" value="TM2D1-3-like"/>
</dbReference>
<dbReference type="PANTHER" id="PTHR21016">
    <property type="entry name" value="BETA-AMYLOID BINDING PROTEIN-RELATED"/>
    <property type="match status" value="1"/>
</dbReference>
<dbReference type="PANTHER" id="PTHR21016:SF4">
    <property type="entry name" value="TM2 DOMAIN-CONTAINING PROTEIN 2"/>
    <property type="match status" value="1"/>
</dbReference>
<dbReference type="Pfam" id="PF05154">
    <property type="entry name" value="TM2"/>
    <property type="match status" value="1"/>
</dbReference>
<sequence>MVLGGYPVSYLLLCGQAALLLGNLLLLHCVSRSHSHNATAEPELTSAGAAHPEGSPGAASWEYGDPHSPVILCSYLPDEFIECEDPVDHVGNTTAFQELGYGCLKFGGQAYRDVEHTRVQCRALDGIECASPRTFLRENKPCIKYTGHYFITTLLYSFFLGCFGVDRFCLGHTGTAVGKLLTLGGLGIWWFVDLILLITGGLMPSDGSNWCTIY</sequence>
<feature type="signal peptide" evidence="1">
    <location>
        <begin position="1"/>
        <end position="35"/>
    </location>
</feature>
<feature type="chain" id="PRO_0000298981" description="TM2 domain-containing protein 2">
    <location>
        <begin position="36"/>
        <end position="214"/>
    </location>
</feature>
<feature type="topological domain" description="Extracellular" evidence="3">
    <location>
        <begin position="36"/>
        <end position="144"/>
    </location>
</feature>
<feature type="transmembrane region" description="Helical" evidence="1">
    <location>
        <begin position="145"/>
        <end position="165"/>
    </location>
</feature>
<feature type="topological domain" description="Cytoplasmic" evidence="3">
    <location>
        <begin position="166"/>
        <end position="182"/>
    </location>
</feature>
<feature type="transmembrane region" description="Helical" evidence="1">
    <location>
        <begin position="183"/>
        <end position="203"/>
    </location>
</feature>
<feature type="topological domain" description="Extracellular" evidence="3">
    <location>
        <begin position="204"/>
        <end position="214"/>
    </location>
</feature>
<feature type="domain" description="TM2" evidence="1">
    <location>
        <begin position="147"/>
        <end position="195"/>
    </location>
</feature>
<feature type="glycosylation site" description="N-linked (GlcNAc...) asparagine" evidence="2">
    <location>
        <position position="37"/>
    </location>
</feature>
<feature type="glycosylation site" description="N-linked (GlcNAc...) asparagine" evidence="2">
    <location>
        <position position="92"/>
    </location>
</feature>